<proteinExistence type="inferred from homology"/>
<name>GPH_CAUVC</name>
<organism>
    <name type="scientific">Caulobacter vibrioides (strain ATCC 19089 / CIP 103742 / CB 15)</name>
    <name type="common">Caulobacter crescentus</name>
    <dbReference type="NCBI Taxonomy" id="190650"/>
    <lineage>
        <taxon>Bacteria</taxon>
        <taxon>Pseudomonadati</taxon>
        <taxon>Pseudomonadota</taxon>
        <taxon>Alphaproteobacteria</taxon>
        <taxon>Caulobacterales</taxon>
        <taxon>Caulobacteraceae</taxon>
        <taxon>Caulobacter</taxon>
    </lineage>
</organism>
<dbReference type="EC" id="3.1.3.18" evidence="1"/>
<dbReference type="EMBL" id="AE005673">
    <property type="protein sequence ID" value="AAK24276.1"/>
    <property type="molecule type" value="Genomic_DNA"/>
</dbReference>
<dbReference type="PIR" id="H87534">
    <property type="entry name" value="H87534"/>
</dbReference>
<dbReference type="RefSeq" id="NP_421108.1">
    <property type="nucleotide sequence ID" value="NC_002696.2"/>
</dbReference>
<dbReference type="RefSeq" id="WP_010920164.1">
    <property type="nucleotide sequence ID" value="NC_002696.2"/>
</dbReference>
<dbReference type="SMR" id="Q9A5Z2"/>
<dbReference type="STRING" id="190650.CC_2305"/>
<dbReference type="EnsemblBacteria" id="AAK24276">
    <property type="protein sequence ID" value="AAK24276"/>
    <property type="gene ID" value="CC_2305"/>
</dbReference>
<dbReference type="KEGG" id="ccr:CC_2305"/>
<dbReference type="PATRIC" id="fig|190650.5.peg.2324"/>
<dbReference type="eggNOG" id="COG0546">
    <property type="taxonomic scope" value="Bacteria"/>
</dbReference>
<dbReference type="HOGENOM" id="CLU_045011_19_1_5"/>
<dbReference type="BioCyc" id="CAULO:CC2305-MONOMER"/>
<dbReference type="UniPathway" id="UPA00865">
    <property type="reaction ID" value="UER00834"/>
</dbReference>
<dbReference type="Proteomes" id="UP000001816">
    <property type="component" value="Chromosome"/>
</dbReference>
<dbReference type="GO" id="GO:0005829">
    <property type="term" value="C:cytosol"/>
    <property type="evidence" value="ECO:0007669"/>
    <property type="project" value="TreeGrafter"/>
</dbReference>
<dbReference type="GO" id="GO:0046872">
    <property type="term" value="F:metal ion binding"/>
    <property type="evidence" value="ECO:0007669"/>
    <property type="project" value="UniProtKB-KW"/>
</dbReference>
<dbReference type="GO" id="GO:0008967">
    <property type="term" value="F:phosphoglycolate phosphatase activity"/>
    <property type="evidence" value="ECO:0007669"/>
    <property type="project" value="UniProtKB-UniRule"/>
</dbReference>
<dbReference type="GO" id="GO:0005975">
    <property type="term" value="P:carbohydrate metabolic process"/>
    <property type="evidence" value="ECO:0007669"/>
    <property type="project" value="InterPro"/>
</dbReference>
<dbReference type="GO" id="GO:0006281">
    <property type="term" value="P:DNA repair"/>
    <property type="evidence" value="ECO:0007669"/>
    <property type="project" value="TreeGrafter"/>
</dbReference>
<dbReference type="GO" id="GO:0046295">
    <property type="term" value="P:glycolate biosynthetic process"/>
    <property type="evidence" value="ECO:0007669"/>
    <property type="project" value="UniProtKB-UniRule"/>
</dbReference>
<dbReference type="CDD" id="cd07512">
    <property type="entry name" value="HAD_PGPase"/>
    <property type="match status" value="1"/>
</dbReference>
<dbReference type="Gene3D" id="3.40.50.1000">
    <property type="entry name" value="HAD superfamily/HAD-like"/>
    <property type="match status" value="1"/>
</dbReference>
<dbReference type="Gene3D" id="1.10.150.240">
    <property type="entry name" value="Putative phosphatase, domain 2"/>
    <property type="match status" value="1"/>
</dbReference>
<dbReference type="HAMAP" id="MF_00495">
    <property type="entry name" value="GPH_hydrolase_bact"/>
    <property type="match status" value="1"/>
</dbReference>
<dbReference type="InterPro" id="IPR050155">
    <property type="entry name" value="HAD-like_hydrolase_sf"/>
</dbReference>
<dbReference type="InterPro" id="IPR036412">
    <property type="entry name" value="HAD-like_sf"/>
</dbReference>
<dbReference type="InterPro" id="IPR006439">
    <property type="entry name" value="HAD-SF_hydro_IA"/>
</dbReference>
<dbReference type="InterPro" id="IPR023214">
    <property type="entry name" value="HAD_sf"/>
</dbReference>
<dbReference type="InterPro" id="IPR023198">
    <property type="entry name" value="PGP-like_dom2"/>
</dbReference>
<dbReference type="InterPro" id="IPR037512">
    <property type="entry name" value="PGPase_prok"/>
</dbReference>
<dbReference type="NCBIfam" id="TIGR01549">
    <property type="entry name" value="HAD-SF-IA-v1"/>
    <property type="match status" value="1"/>
</dbReference>
<dbReference type="PANTHER" id="PTHR43434">
    <property type="entry name" value="PHOSPHOGLYCOLATE PHOSPHATASE"/>
    <property type="match status" value="1"/>
</dbReference>
<dbReference type="PANTHER" id="PTHR43434:SF1">
    <property type="entry name" value="PHOSPHOGLYCOLATE PHOSPHATASE"/>
    <property type="match status" value="1"/>
</dbReference>
<dbReference type="Pfam" id="PF00702">
    <property type="entry name" value="Hydrolase"/>
    <property type="match status" value="1"/>
</dbReference>
<dbReference type="SFLD" id="SFLDG01135">
    <property type="entry name" value="C1.5.6:_HAD__Beta-PGM__Phospha"/>
    <property type="match status" value="1"/>
</dbReference>
<dbReference type="SFLD" id="SFLDG01129">
    <property type="entry name" value="C1.5:_HAD__Beta-PGM__Phosphata"/>
    <property type="match status" value="1"/>
</dbReference>
<dbReference type="SUPFAM" id="SSF56784">
    <property type="entry name" value="HAD-like"/>
    <property type="match status" value="1"/>
</dbReference>
<evidence type="ECO:0000255" key="1">
    <source>
        <dbReference type="HAMAP-Rule" id="MF_00495"/>
    </source>
</evidence>
<keyword id="KW-0119">Carbohydrate metabolism</keyword>
<keyword id="KW-0378">Hydrolase</keyword>
<keyword id="KW-0460">Magnesium</keyword>
<keyword id="KW-0479">Metal-binding</keyword>
<keyword id="KW-1185">Reference proteome</keyword>
<sequence length="237" mass="24219">MSTLHDLNGATIAFDLDGTLVDTAPDLVGALNIILAQESLPPLPFDDVRLMVGRGARALLERGFAAAGAPLDAEQAPALVQRFIDVYLARIADESAPFPGVVEVLSDLKTAGAKLVVCTNKLTNLSTALLDAVALSPFFEAVIGADLAPAAKPDGRHVAAAVAAVGGDVSRAVMIGDSVNDALGARNAGVPGVLVSFGYTEEPVETLGADLVIHSFLDVPKACITLLTSCPAPNTGL</sequence>
<gene>
    <name evidence="1" type="primary">gph</name>
    <name type="ordered locus">CC_2305</name>
</gene>
<accession>Q9A5Z2</accession>
<comment type="function">
    <text evidence="1">Specifically catalyzes the dephosphorylation of 2-phosphoglycolate. Is involved in the dissimilation of the intracellular 2-phosphoglycolate formed during the DNA repair of 3'-phosphoglycolate ends, a major class of DNA lesions induced by oxidative stress.</text>
</comment>
<comment type="catalytic activity">
    <reaction evidence="1">
        <text>2-phosphoglycolate + H2O = glycolate + phosphate</text>
        <dbReference type="Rhea" id="RHEA:14369"/>
        <dbReference type="ChEBI" id="CHEBI:15377"/>
        <dbReference type="ChEBI" id="CHEBI:29805"/>
        <dbReference type="ChEBI" id="CHEBI:43474"/>
        <dbReference type="ChEBI" id="CHEBI:58033"/>
        <dbReference type="EC" id="3.1.3.18"/>
    </reaction>
</comment>
<comment type="cofactor">
    <cofactor evidence="1">
        <name>Mg(2+)</name>
        <dbReference type="ChEBI" id="CHEBI:18420"/>
    </cofactor>
</comment>
<comment type="pathway">
    <text evidence="1">Organic acid metabolism; glycolate biosynthesis; glycolate from 2-phosphoglycolate: step 1/1.</text>
</comment>
<comment type="similarity">
    <text evidence="1">Belongs to the HAD-like hydrolase superfamily. CbbY/CbbZ/Gph/YieH family.</text>
</comment>
<protein>
    <recommendedName>
        <fullName evidence="1">Phosphoglycolate phosphatase</fullName>
        <shortName evidence="1">PGP</shortName>
        <shortName evidence="1">PGPase</shortName>
        <ecNumber evidence="1">3.1.3.18</ecNumber>
    </recommendedName>
</protein>
<feature type="chain" id="PRO_0000108026" description="Phosphoglycolate phosphatase">
    <location>
        <begin position="1"/>
        <end position="237"/>
    </location>
</feature>
<feature type="active site" description="Nucleophile" evidence="1">
    <location>
        <position position="15"/>
    </location>
</feature>
<feature type="binding site" evidence="1">
    <location>
        <position position="15"/>
    </location>
    <ligand>
        <name>Mg(2+)</name>
        <dbReference type="ChEBI" id="CHEBI:18420"/>
    </ligand>
</feature>
<feature type="binding site" evidence="1">
    <location>
        <position position="17"/>
    </location>
    <ligand>
        <name>Mg(2+)</name>
        <dbReference type="ChEBI" id="CHEBI:18420"/>
    </ligand>
</feature>
<feature type="binding site" evidence="1">
    <location>
        <position position="177"/>
    </location>
    <ligand>
        <name>Mg(2+)</name>
        <dbReference type="ChEBI" id="CHEBI:18420"/>
    </ligand>
</feature>
<reference key="1">
    <citation type="journal article" date="2001" name="Proc. Natl. Acad. Sci. U.S.A.">
        <title>Complete genome sequence of Caulobacter crescentus.</title>
        <authorList>
            <person name="Nierman W.C."/>
            <person name="Feldblyum T.V."/>
            <person name="Laub M.T."/>
            <person name="Paulsen I.T."/>
            <person name="Nelson K.E."/>
            <person name="Eisen J.A."/>
            <person name="Heidelberg J.F."/>
            <person name="Alley M.R.K."/>
            <person name="Ohta N."/>
            <person name="Maddock J.R."/>
            <person name="Potocka I."/>
            <person name="Nelson W.C."/>
            <person name="Newton A."/>
            <person name="Stephens C."/>
            <person name="Phadke N.D."/>
            <person name="Ely B."/>
            <person name="DeBoy R.T."/>
            <person name="Dodson R.J."/>
            <person name="Durkin A.S."/>
            <person name="Gwinn M.L."/>
            <person name="Haft D.H."/>
            <person name="Kolonay J.F."/>
            <person name="Smit J."/>
            <person name="Craven M.B."/>
            <person name="Khouri H.M."/>
            <person name="Shetty J."/>
            <person name="Berry K.J."/>
            <person name="Utterback T.R."/>
            <person name="Tran K."/>
            <person name="Wolf A.M."/>
            <person name="Vamathevan J.J."/>
            <person name="Ermolaeva M.D."/>
            <person name="White O."/>
            <person name="Salzberg S.L."/>
            <person name="Venter J.C."/>
            <person name="Shapiro L."/>
            <person name="Fraser C.M."/>
        </authorList>
    </citation>
    <scope>NUCLEOTIDE SEQUENCE [LARGE SCALE GENOMIC DNA]</scope>
    <source>
        <strain>ATCC 19089 / CIP 103742 / CB 15</strain>
    </source>
</reference>